<proteinExistence type="inferred from homology"/>
<comment type="pathway">
    <text>Slime biogenesis; slime polysaccharide biosynthesis.</text>
</comment>
<comment type="similarity">
    <text evidence="1">Belongs to the transferase hexapeptide repeat family.</text>
</comment>
<sequence length="162" mass="17616">MLEDLRANSWSLRPCCMVLAYRVAHFCSVWRKKNVLNNLWAAPLLVLYRIITECFFGYEIQAAATIGRRFTIHHGYAVVINKNVVAGDDFTIRHGVTIGNRGADNMACPHIGNGVELGANVIILGDITLGNNVTVGAGSVVLDSVPDNALVVGEKARVKVIK</sequence>
<reference key="1">
    <citation type="journal article" date="1996" name="J. Bacteriol.">
        <title>Organization of the Escherichia coli K-12 gene cluster responsible for production of the extracellular polysaccharide colanic acid.</title>
        <authorList>
            <person name="Stevenson G."/>
            <person name="Andrianopoulos K."/>
            <person name="Hobbs M."/>
            <person name="Reeves P.R."/>
        </authorList>
    </citation>
    <scope>NUCLEOTIDE SEQUENCE [GENOMIC DNA]</scope>
    <source>
        <strain>K12</strain>
    </source>
</reference>
<reference key="2">
    <citation type="journal article" date="1996" name="DNA Res.">
        <title>A 460-kb DNA sequence of the Escherichia coli K-12 genome corresponding to the 40.1-50.0 min region on the linkage map.</title>
        <authorList>
            <person name="Itoh T."/>
            <person name="Aiba H."/>
            <person name="Baba T."/>
            <person name="Fujita K."/>
            <person name="Hayashi K."/>
            <person name="Inada T."/>
            <person name="Isono K."/>
            <person name="Kasai H."/>
            <person name="Kimura S."/>
            <person name="Kitakawa M."/>
            <person name="Kitagawa M."/>
            <person name="Makino K."/>
            <person name="Miki T."/>
            <person name="Mizobuchi K."/>
            <person name="Mori H."/>
            <person name="Mori T."/>
            <person name="Motomura K."/>
            <person name="Nakade S."/>
            <person name="Nakamura Y."/>
            <person name="Nashimoto H."/>
            <person name="Nishio Y."/>
            <person name="Oshima T."/>
            <person name="Saito N."/>
            <person name="Sampei G."/>
            <person name="Seki Y."/>
            <person name="Sivasundaram S."/>
            <person name="Tagami H."/>
            <person name="Takeda J."/>
            <person name="Takemoto K."/>
            <person name="Wada C."/>
            <person name="Yamamoto Y."/>
            <person name="Horiuchi T."/>
        </authorList>
    </citation>
    <scope>NUCLEOTIDE SEQUENCE [LARGE SCALE GENOMIC DNA]</scope>
    <source>
        <strain>K12 / W3110 / ATCC 27325 / DSM 5911</strain>
    </source>
</reference>
<reference key="3">
    <citation type="journal article" date="1997" name="Science">
        <title>The complete genome sequence of Escherichia coli K-12.</title>
        <authorList>
            <person name="Blattner F.R."/>
            <person name="Plunkett G. III"/>
            <person name="Bloch C.A."/>
            <person name="Perna N.T."/>
            <person name="Burland V."/>
            <person name="Riley M."/>
            <person name="Collado-Vides J."/>
            <person name="Glasner J.D."/>
            <person name="Rode C.K."/>
            <person name="Mayhew G.F."/>
            <person name="Gregor J."/>
            <person name="Davis N.W."/>
            <person name="Kirkpatrick H.A."/>
            <person name="Goeden M.A."/>
            <person name="Rose D.J."/>
            <person name="Mau B."/>
            <person name="Shao Y."/>
        </authorList>
    </citation>
    <scope>NUCLEOTIDE SEQUENCE [LARGE SCALE GENOMIC DNA]</scope>
    <source>
        <strain>K12 / MG1655 / ATCC 47076</strain>
    </source>
</reference>
<reference key="4">
    <citation type="journal article" date="2006" name="Mol. Syst. Biol.">
        <title>Highly accurate genome sequences of Escherichia coli K-12 strains MG1655 and W3110.</title>
        <authorList>
            <person name="Hayashi K."/>
            <person name="Morooka N."/>
            <person name="Yamamoto Y."/>
            <person name="Fujita K."/>
            <person name="Isono K."/>
            <person name="Choi S."/>
            <person name="Ohtsubo E."/>
            <person name="Baba T."/>
            <person name="Wanner B.L."/>
            <person name="Mori H."/>
            <person name="Horiuchi T."/>
        </authorList>
    </citation>
    <scope>NUCLEOTIDE SEQUENCE [LARGE SCALE GENOMIC DNA]</scope>
    <source>
        <strain>K12 / W3110 / ATCC 27325 / DSM 5911</strain>
    </source>
</reference>
<organism>
    <name type="scientific">Escherichia coli (strain K12)</name>
    <dbReference type="NCBI Taxonomy" id="83333"/>
    <lineage>
        <taxon>Bacteria</taxon>
        <taxon>Pseudomonadati</taxon>
        <taxon>Pseudomonadota</taxon>
        <taxon>Gammaproteobacteria</taxon>
        <taxon>Enterobacterales</taxon>
        <taxon>Enterobacteriaceae</taxon>
        <taxon>Escherichia</taxon>
    </lineage>
</organism>
<evidence type="ECO:0000305" key="1"/>
<protein>
    <recommendedName>
        <fullName>Putative colanic acid biosynthesis acetyltransferase WcaB</fullName>
        <ecNumber>2.3.1.-</ecNumber>
    </recommendedName>
</protein>
<gene>
    <name type="primary">wcaB</name>
    <name type="ordered locus">b2058</name>
    <name type="ordered locus">JW2043</name>
</gene>
<feature type="chain" id="PRO_0000068733" description="Putative colanic acid biosynthesis acetyltransferase WcaB">
    <location>
        <begin position="1"/>
        <end position="162"/>
    </location>
</feature>
<name>WCAB_ECOLI</name>
<accession>P0ACC9</accession>
<accession>P77558</accession>
<dbReference type="EC" id="2.3.1.-"/>
<dbReference type="EMBL" id="U38473">
    <property type="protein sequence ID" value="AAC77837.1"/>
    <property type="molecule type" value="Genomic_DNA"/>
</dbReference>
<dbReference type="EMBL" id="U00096">
    <property type="protein sequence ID" value="AAC75119.1"/>
    <property type="molecule type" value="Genomic_DNA"/>
</dbReference>
<dbReference type="EMBL" id="AP009048">
    <property type="protein sequence ID" value="BAA15911.1"/>
    <property type="molecule type" value="Genomic_DNA"/>
</dbReference>
<dbReference type="PIR" id="A64972">
    <property type="entry name" value="A64972"/>
</dbReference>
<dbReference type="RefSeq" id="NP_416562.1">
    <property type="nucleotide sequence ID" value="NC_000913.3"/>
</dbReference>
<dbReference type="RefSeq" id="WP_000888740.1">
    <property type="nucleotide sequence ID" value="NZ_SSUV01000030.1"/>
</dbReference>
<dbReference type="SMR" id="P0ACC9"/>
<dbReference type="BioGRID" id="4260674">
    <property type="interactions" value="269"/>
</dbReference>
<dbReference type="DIP" id="DIP-48109N"/>
<dbReference type="FunCoup" id="P0ACC9">
    <property type="interactions" value="48"/>
</dbReference>
<dbReference type="IntAct" id="P0ACC9">
    <property type="interactions" value="1"/>
</dbReference>
<dbReference type="STRING" id="511145.b2058"/>
<dbReference type="PaxDb" id="511145-b2058"/>
<dbReference type="EnsemblBacteria" id="AAC75119">
    <property type="protein sequence ID" value="AAC75119"/>
    <property type="gene ID" value="b2058"/>
</dbReference>
<dbReference type="GeneID" id="93775133"/>
<dbReference type="GeneID" id="946573"/>
<dbReference type="KEGG" id="ecj:JW2043"/>
<dbReference type="KEGG" id="eco:b2058"/>
<dbReference type="KEGG" id="ecoc:C3026_11580"/>
<dbReference type="PATRIC" id="fig|1411691.4.peg.193"/>
<dbReference type="EchoBASE" id="EB3340"/>
<dbReference type="eggNOG" id="COG1045">
    <property type="taxonomic scope" value="Bacteria"/>
</dbReference>
<dbReference type="HOGENOM" id="CLU_051638_10_2_6"/>
<dbReference type="InParanoid" id="P0ACC9"/>
<dbReference type="OMA" id="WLMGIEI"/>
<dbReference type="OrthoDB" id="9801456at2"/>
<dbReference type="PhylomeDB" id="P0ACC9"/>
<dbReference type="BioCyc" id="EcoCyc:G7103-MONOMER"/>
<dbReference type="BioCyc" id="MetaCyc:G7103-MONOMER"/>
<dbReference type="UniPathway" id="UPA00936"/>
<dbReference type="PRO" id="PR:P0ACC9"/>
<dbReference type="Proteomes" id="UP000000625">
    <property type="component" value="Chromosome"/>
</dbReference>
<dbReference type="GO" id="GO:0005737">
    <property type="term" value="C:cytoplasm"/>
    <property type="evidence" value="ECO:0007669"/>
    <property type="project" value="InterPro"/>
</dbReference>
<dbReference type="GO" id="GO:0016407">
    <property type="term" value="F:acetyltransferase activity"/>
    <property type="evidence" value="ECO:0000250"/>
    <property type="project" value="EcoliWiki"/>
</dbReference>
<dbReference type="GO" id="GO:0016413">
    <property type="term" value="F:O-acetyltransferase activity"/>
    <property type="evidence" value="ECO:0000314"/>
    <property type="project" value="EcoCyc"/>
</dbReference>
<dbReference type="GO" id="GO:0009001">
    <property type="term" value="F:serine O-acetyltransferase activity"/>
    <property type="evidence" value="ECO:0007669"/>
    <property type="project" value="InterPro"/>
</dbReference>
<dbReference type="GO" id="GO:0009242">
    <property type="term" value="P:colanic acid biosynthetic process"/>
    <property type="evidence" value="ECO:0000314"/>
    <property type="project" value="EcoCyc"/>
</dbReference>
<dbReference type="GO" id="GO:0006535">
    <property type="term" value="P:cysteine biosynthetic process from serine"/>
    <property type="evidence" value="ECO:0007669"/>
    <property type="project" value="InterPro"/>
</dbReference>
<dbReference type="GO" id="GO:0009103">
    <property type="term" value="P:lipopolysaccharide biosynthetic process"/>
    <property type="evidence" value="ECO:0007669"/>
    <property type="project" value="UniProtKB-KW"/>
</dbReference>
<dbReference type="GO" id="GO:0045228">
    <property type="term" value="P:slime layer polysaccharide biosynthetic process"/>
    <property type="evidence" value="ECO:0007669"/>
    <property type="project" value="UniProtKB-UniPathway"/>
</dbReference>
<dbReference type="CDD" id="cd03354">
    <property type="entry name" value="LbH_SAT"/>
    <property type="match status" value="1"/>
</dbReference>
<dbReference type="FunFam" id="2.160.10.10:FF:000013">
    <property type="entry name" value="Acetyltransferase"/>
    <property type="match status" value="1"/>
</dbReference>
<dbReference type="Gene3D" id="2.160.10.10">
    <property type="entry name" value="Hexapeptide repeat proteins"/>
    <property type="match status" value="1"/>
</dbReference>
<dbReference type="InterPro" id="IPR024027">
    <property type="entry name" value="Colanic_acid_synth_WcaB"/>
</dbReference>
<dbReference type="InterPro" id="IPR001451">
    <property type="entry name" value="Hexapep"/>
</dbReference>
<dbReference type="InterPro" id="IPR018357">
    <property type="entry name" value="Hexapep_transf_CS"/>
</dbReference>
<dbReference type="InterPro" id="IPR045304">
    <property type="entry name" value="LbH_SAT"/>
</dbReference>
<dbReference type="InterPro" id="IPR005881">
    <property type="entry name" value="Ser_O-AcTrfase"/>
</dbReference>
<dbReference type="InterPro" id="IPR011004">
    <property type="entry name" value="Trimer_LpxA-like_sf"/>
</dbReference>
<dbReference type="NCBIfam" id="NF007564">
    <property type="entry name" value="PRK10191.1"/>
    <property type="match status" value="1"/>
</dbReference>
<dbReference type="NCBIfam" id="TIGR04016">
    <property type="entry name" value="WcaB"/>
    <property type="match status" value="1"/>
</dbReference>
<dbReference type="PANTHER" id="PTHR42811">
    <property type="entry name" value="SERINE ACETYLTRANSFERASE"/>
    <property type="match status" value="1"/>
</dbReference>
<dbReference type="Pfam" id="PF00132">
    <property type="entry name" value="Hexapep"/>
    <property type="match status" value="1"/>
</dbReference>
<dbReference type="PIRSF" id="PIRSF000441">
    <property type="entry name" value="CysE"/>
    <property type="match status" value="1"/>
</dbReference>
<dbReference type="SUPFAM" id="SSF51161">
    <property type="entry name" value="Trimeric LpxA-like enzymes"/>
    <property type="match status" value="1"/>
</dbReference>
<dbReference type="PROSITE" id="PS00101">
    <property type="entry name" value="HEXAPEP_TRANSFERASES"/>
    <property type="match status" value="1"/>
</dbReference>
<keyword id="KW-0012">Acyltransferase</keyword>
<keyword id="KW-0448">Lipopolysaccharide biosynthesis</keyword>
<keyword id="KW-1185">Reference proteome</keyword>
<keyword id="KW-0677">Repeat</keyword>
<keyword id="KW-0808">Transferase</keyword>